<protein>
    <recommendedName>
        <fullName evidence="1">ATP-dependent protease ATPase subunit HslU</fullName>
    </recommendedName>
    <alternativeName>
        <fullName evidence="1">Unfoldase HslU</fullName>
    </alternativeName>
</protein>
<proteinExistence type="inferred from homology"/>
<gene>
    <name evidence="1" type="primary">hslU</name>
    <name type="synonym">lapA</name>
</gene>
<keyword id="KW-0067">ATP-binding</keyword>
<keyword id="KW-0143">Chaperone</keyword>
<keyword id="KW-0963">Cytoplasm</keyword>
<keyword id="KW-0547">Nucleotide-binding</keyword>
<dbReference type="EMBL" id="M59210">
    <property type="protein sequence ID" value="AAA25534.1"/>
    <property type="molecule type" value="Genomic_DNA"/>
</dbReference>
<dbReference type="PIR" id="S27609">
    <property type="entry name" value="S27609"/>
</dbReference>
<dbReference type="SMR" id="P32180"/>
<dbReference type="STRING" id="75985.WC39_13350"/>
<dbReference type="MEROPS" id="X20.005"/>
<dbReference type="OrthoDB" id="9804062at2"/>
<dbReference type="GO" id="GO:0009376">
    <property type="term" value="C:HslUV protease complex"/>
    <property type="evidence" value="ECO:0007669"/>
    <property type="project" value="UniProtKB-UniRule"/>
</dbReference>
<dbReference type="GO" id="GO:0005524">
    <property type="term" value="F:ATP binding"/>
    <property type="evidence" value="ECO:0007669"/>
    <property type="project" value="UniProtKB-UniRule"/>
</dbReference>
<dbReference type="GO" id="GO:0016887">
    <property type="term" value="F:ATP hydrolysis activity"/>
    <property type="evidence" value="ECO:0007669"/>
    <property type="project" value="InterPro"/>
</dbReference>
<dbReference type="GO" id="GO:0008233">
    <property type="term" value="F:peptidase activity"/>
    <property type="evidence" value="ECO:0007669"/>
    <property type="project" value="InterPro"/>
</dbReference>
<dbReference type="GO" id="GO:0036402">
    <property type="term" value="F:proteasome-activating activity"/>
    <property type="evidence" value="ECO:0007669"/>
    <property type="project" value="UniProtKB-UniRule"/>
</dbReference>
<dbReference type="GO" id="GO:0043335">
    <property type="term" value="P:protein unfolding"/>
    <property type="evidence" value="ECO:0007669"/>
    <property type="project" value="UniProtKB-UniRule"/>
</dbReference>
<dbReference type="GO" id="GO:0051603">
    <property type="term" value="P:proteolysis involved in protein catabolic process"/>
    <property type="evidence" value="ECO:0007669"/>
    <property type="project" value="TreeGrafter"/>
</dbReference>
<dbReference type="CDD" id="cd19498">
    <property type="entry name" value="RecA-like_HslU"/>
    <property type="match status" value="1"/>
</dbReference>
<dbReference type="FunFam" id="1.10.8.10:FF:000028">
    <property type="entry name" value="ATP-dependent protease ATPase subunit HslU"/>
    <property type="match status" value="2"/>
</dbReference>
<dbReference type="FunFam" id="1.10.8.60:FF:000027">
    <property type="entry name" value="ATP-dependent protease ATPase subunit HslU"/>
    <property type="match status" value="1"/>
</dbReference>
<dbReference type="FunFam" id="3.40.50.300:FF:000213">
    <property type="entry name" value="ATP-dependent protease ATPase subunit HslU"/>
    <property type="match status" value="1"/>
</dbReference>
<dbReference type="FunFam" id="3.40.50.300:FF:000220">
    <property type="entry name" value="ATP-dependent protease ATPase subunit HslU"/>
    <property type="match status" value="1"/>
</dbReference>
<dbReference type="Gene3D" id="1.10.8.60">
    <property type="match status" value="1"/>
</dbReference>
<dbReference type="Gene3D" id="1.10.8.10">
    <property type="entry name" value="DNA helicase RuvA subunit, C-terminal domain"/>
    <property type="match status" value="1"/>
</dbReference>
<dbReference type="Gene3D" id="3.40.50.300">
    <property type="entry name" value="P-loop containing nucleotide triphosphate hydrolases"/>
    <property type="match status" value="2"/>
</dbReference>
<dbReference type="HAMAP" id="MF_00249">
    <property type="entry name" value="HslU"/>
    <property type="match status" value="1"/>
</dbReference>
<dbReference type="InterPro" id="IPR003593">
    <property type="entry name" value="AAA+_ATPase"/>
</dbReference>
<dbReference type="InterPro" id="IPR050052">
    <property type="entry name" value="ATP-dep_Clp_protease_ClpX"/>
</dbReference>
<dbReference type="InterPro" id="IPR003959">
    <property type="entry name" value="ATPase_AAA_core"/>
</dbReference>
<dbReference type="InterPro" id="IPR019489">
    <property type="entry name" value="Clp_ATPase_C"/>
</dbReference>
<dbReference type="InterPro" id="IPR004491">
    <property type="entry name" value="HslU"/>
</dbReference>
<dbReference type="InterPro" id="IPR027417">
    <property type="entry name" value="P-loop_NTPase"/>
</dbReference>
<dbReference type="NCBIfam" id="TIGR00390">
    <property type="entry name" value="hslU"/>
    <property type="match status" value="1"/>
</dbReference>
<dbReference type="NCBIfam" id="NF003544">
    <property type="entry name" value="PRK05201.1"/>
    <property type="match status" value="1"/>
</dbReference>
<dbReference type="PANTHER" id="PTHR48102">
    <property type="entry name" value="ATP-DEPENDENT CLP PROTEASE ATP-BINDING SUBUNIT CLPX-LIKE, MITOCHONDRIAL-RELATED"/>
    <property type="match status" value="1"/>
</dbReference>
<dbReference type="PANTHER" id="PTHR48102:SF3">
    <property type="entry name" value="ATP-DEPENDENT PROTEASE ATPASE SUBUNIT HSLU"/>
    <property type="match status" value="1"/>
</dbReference>
<dbReference type="Pfam" id="PF00004">
    <property type="entry name" value="AAA"/>
    <property type="match status" value="1"/>
</dbReference>
<dbReference type="Pfam" id="PF07724">
    <property type="entry name" value="AAA_2"/>
    <property type="match status" value="1"/>
</dbReference>
<dbReference type="SMART" id="SM00382">
    <property type="entry name" value="AAA"/>
    <property type="match status" value="1"/>
</dbReference>
<dbReference type="SMART" id="SM01086">
    <property type="entry name" value="ClpB_D2-small"/>
    <property type="match status" value="1"/>
</dbReference>
<dbReference type="SUPFAM" id="SSF52540">
    <property type="entry name" value="P-loop containing nucleoside triphosphate hydrolases"/>
    <property type="match status" value="1"/>
</dbReference>
<sequence length="440" mass="49693">MSMTPREIVSELDAHIIGQKDAKRAVAIALRNRWRRMQLPEDLRQEVTPKNILMIGPTGVGKTEIARRLAKLANAPFIKVEATKFTEVGYVGKEVDSIIRDLADVSMKLVRQQAVEKNKMRAQDAAEDRILDVLLPPAKDQWGNVQESDNNSTRQTFRKKLREGQLDDKEIEIDVAAQVSVEIMTPPGMEEMTSQLQSLFEGMSPSKTKKRKMKIKDALKVMLDEEAAKLVNPEELKQQAIEAVEQHGIVFIDEIDKICKKGEHSGGDVSREGVQRDLLPIIEGSTVNTKHGMVKTDHILFICSGAFQVARPSDLLPELQGRLPIRVELKSLTKEDFERILTEPNASLTLQYRELMKTEGVEIEFTKDGISRIAESAFRVNEKTENIGARRLHTVLERLMDGISFDASERRGEKIIIDENYVSEALNDVVENEDLSRFIL</sequence>
<comment type="function">
    <text evidence="1">ATPase subunit of a proteasome-like degradation complex; this subunit has chaperone activity. The binding of ATP and its subsequent hydrolysis by HslU are essential for unfolding of protein substrates subsequently hydrolyzed by HslV. HslU recognizes the N-terminal part of its protein substrates and unfolds these before they are guided to HslV for hydrolysis.</text>
</comment>
<comment type="subunit">
    <text evidence="1">A double ring-shaped homohexamer of HslV is capped on each side by a ring-shaped HslU homohexamer. The assembly of the HslU/HslV complex is dependent on binding of ATP.</text>
</comment>
<comment type="subcellular location">
    <subcellularLocation>
        <location evidence="1">Cytoplasm</location>
    </subcellularLocation>
</comment>
<comment type="similarity">
    <text evidence="1">Belongs to the ClpX chaperone family. HslU subfamily.</text>
</comment>
<organism>
    <name type="scientific">Mannheimia haemolytica</name>
    <name type="common">Pasteurella haemolytica</name>
    <dbReference type="NCBI Taxonomy" id="75985"/>
    <lineage>
        <taxon>Bacteria</taxon>
        <taxon>Pseudomonadati</taxon>
        <taxon>Pseudomonadota</taxon>
        <taxon>Gammaproteobacteria</taxon>
        <taxon>Pasteurellales</taxon>
        <taxon>Pasteurellaceae</taxon>
        <taxon>Mannheimia</taxon>
    </lineage>
</organism>
<name>HSLU_MANHA</name>
<reference key="1">
    <citation type="journal article" date="1993" name="Infect. Immun.">
        <title>Expression of the Pasteurella haemolytica leukotoxin is inhibited by a locus that encodes an ATP-binding cassette homolog.</title>
        <authorList>
            <person name="Highlander S.K."/>
            <person name="Wickersham E.A."/>
            <person name="Garza O."/>
            <person name="Weinstock G.M."/>
        </authorList>
    </citation>
    <scope>NUCLEOTIDE SEQUENCE [GENOMIC DNA]</scope>
    <source>
        <strain>Serotype A1 / PH101</strain>
    </source>
</reference>
<reference key="2">
    <citation type="journal article" date="1993" name="Infect. Immun.">
        <authorList>
            <person name="Highlander S.K."/>
            <person name="Wickersham E.A."/>
            <person name="Garza O."/>
            <person name="Weinstock G.M."/>
        </authorList>
    </citation>
    <scope>ERRATUM OF PUBMED:8359916</scope>
</reference>
<evidence type="ECO:0000255" key="1">
    <source>
        <dbReference type="HAMAP-Rule" id="MF_00249"/>
    </source>
</evidence>
<evidence type="ECO:0000256" key="2">
    <source>
        <dbReference type="SAM" id="MobiDB-lite"/>
    </source>
</evidence>
<feature type="chain" id="PRO_0000160527" description="ATP-dependent protease ATPase subunit HslU">
    <location>
        <begin position="1"/>
        <end position="440"/>
    </location>
</feature>
<feature type="region of interest" description="Disordered" evidence="2">
    <location>
        <begin position="141"/>
        <end position="161"/>
    </location>
</feature>
<feature type="compositionally biased region" description="Polar residues" evidence="2">
    <location>
        <begin position="143"/>
        <end position="155"/>
    </location>
</feature>
<feature type="binding site" evidence="1">
    <location>
        <position position="17"/>
    </location>
    <ligand>
        <name>ATP</name>
        <dbReference type="ChEBI" id="CHEBI:30616"/>
    </ligand>
</feature>
<feature type="binding site" evidence="1">
    <location>
        <begin position="59"/>
        <end position="64"/>
    </location>
    <ligand>
        <name>ATP</name>
        <dbReference type="ChEBI" id="CHEBI:30616"/>
    </ligand>
</feature>
<feature type="binding site" evidence="1">
    <location>
        <position position="253"/>
    </location>
    <ligand>
        <name>ATP</name>
        <dbReference type="ChEBI" id="CHEBI:30616"/>
    </ligand>
</feature>
<feature type="binding site" evidence="1">
    <location>
        <position position="318"/>
    </location>
    <ligand>
        <name>ATP</name>
        <dbReference type="ChEBI" id="CHEBI:30616"/>
    </ligand>
</feature>
<feature type="binding site" evidence="1">
    <location>
        <position position="390"/>
    </location>
    <ligand>
        <name>ATP</name>
        <dbReference type="ChEBI" id="CHEBI:30616"/>
    </ligand>
</feature>
<accession>P32180</accession>